<name>PUR9_CYAP4</name>
<sequence>MPPLALLSTSDKTGVVEFARSLVNEFGFQLISSGGTAKALIAAGLPVTKVADYTGSPEILGGRVKTLHPRIHGGILARRDLPTDLQDLAATGIEPIDLVVVNLYPFEQTIAQPDMTLSDAIEQIDIGGPALLRASAKNFAHVTVLCSPEQYGPCLAELRQQQGQTSLIFRQSCAQKAFWHTATYDQAIATYLTSSDPTEISLPPRLSVTATQFQSLRYGENPHQAAAWYRTGTATGGWSGATQLQGKELSYNNLVDLEAARAIVAEFTEQPAAVITKHTNPCGVAEGDSLVEAYRRAFQADSTSAFGGIVALNHPLDGETAKAMTETFLECIVAPGCEPEAEAILKTKSNLRVLVLPDLSQGASLEIKAIAGGFLVQQPDRQPIQPQSWEVVSQTKPTEEQWQELIFAWKVAKHVKSNAIVVTADRVTLGVGAGQMNRVGSVQIALTQAGEKAQGAVLASDGFFPFDDSVRAAAAAGIGAIVQPGGSKRDADSIQAADQLGLVMVFTHTRHFLH</sequence>
<protein>
    <recommendedName>
        <fullName evidence="1">Bifunctional purine biosynthesis protein PurH</fullName>
    </recommendedName>
    <domain>
        <recommendedName>
            <fullName evidence="1">Phosphoribosylaminoimidazolecarboxamide formyltransferase</fullName>
            <ecNumber evidence="1">2.1.2.3</ecNumber>
        </recommendedName>
        <alternativeName>
            <fullName evidence="1">AICAR transformylase</fullName>
        </alternativeName>
    </domain>
    <domain>
        <recommendedName>
            <fullName evidence="1">IMP cyclohydrolase</fullName>
            <ecNumber evidence="1">3.5.4.10</ecNumber>
        </recommendedName>
        <alternativeName>
            <fullName evidence="1">ATIC</fullName>
        </alternativeName>
        <alternativeName>
            <fullName evidence="1">IMP synthase</fullName>
        </alternativeName>
        <alternativeName>
            <fullName evidence="1">Inosinicase</fullName>
        </alternativeName>
    </domain>
</protein>
<proteinExistence type="inferred from homology"/>
<organism>
    <name type="scientific">Cyanothece sp. (strain PCC 7425 / ATCC 29141)</name>
    <dbReference type="NCBI Taxonomy" id="395961"/>
    <lineage>
        <taxon>Bacteria</taxon>
        <taxon>Bacillati</taxon>
        <taxon>Cyanobacteriota</taxon>
        <taxon>Cyanophyceae</taxon>
        <taxon>Gomontiellales</taxon>
        <taxon>Cyanothecaceae</taxon>
        <taxon>Cyanothece</taxon>
    </lineage>
</organism>
<comment type="catalytic activity">
    <reaction evidence="1">
        <text>(6R)-10-formyltetrahydrofolate + 5-amino-1-(5-phospho-beta-D-ribosyl)imidazole-4-carboxamide = 5-formamido-1-(5-phospho-D-ribosyl)imidazole-4-carboxamide + (6S)-5,6,7,8-tetrahydrofolate</text>
        <dbReference type="Rhea" id="RHEA:22192"/>
        <dbReference type="ChEBI" id="CHEBI:57453"/>
        <dbReference type="ChEBI" id="CHEBI:58467"/>
        <dbReference type="ChEBI" id="CHEBI:58475"/>
        <dbReference type="ChEBI" id="CHEBI:195366"/>
        <dbReference type="EC" id="2.1.2.3"/>
    </reaction>
</comment>
<comment type="catalytic activity">
    <reaction evidence="1">
        <text>IMP + H2O = 5-formamido-1-(5-phospho-D-ribosyl)imidazole-4-carboxamide</text>
        <dbReference type="Rhea" id="RHEA:18445"/>
        <dbReference type="ChEBI" id="CHEBI:15377"/>
        <dbReference type="ChEBI" id="CHEBI:58053"/>
        <dbReference type="ChEBI" id="CHEBI:58467"/>
        <dbReference type="EC" id="3.5.4.10"/>
    </reaction>
</comment>
<comment type="pathway">
    <text evidence="1">Purine metabolism; IMP biosynthesis via de novo pathway; 5-formamido-1-(5-phospho-D-ribosyl)imidazole-4-carboxamide from 5-amino-1-(5-phospho-D-ribosyl)imidazole-4-carboxamide (10-formyl THF route): step 1/1.</text>
</comment>
<comment type="pathway">
    <text evidence="1">Purine metabolism; IMP biosynthesis via de novo pathway; IMP from 5-formamido-1-(5-phospho-D-ribosyl)imidazole-4-carboxamide: step 1/1.</text>
</comment>
<comment type="domain">
    <text evidence="1">The IMP cyclohydrolase activity resides in the N-terminal region.</text>
</comment>
<comment type="similarity">
    <text evidence="1">Belongs to the PurH family.</text>
</comment>
<gene>
    <name evidence="1" type="primary">purH</name>
    <name type="ordered locus">Cyan7425_1454</name>
</gene>
<accession>B8HPG4</accession>
<reference key="1">
    <citation type="journal article" date="2011" name="MBio">
        <title>Novel metabolic attributes of the genus Cyanothece, comprising a group of unicellular nitrogen-fixing Cyanobacteria.</title>
        <authorList>
            <person name="Bandyopadhyay A."/>
            <person name="Elvitigala T."/>
            <person name="Welsh E."/>
            <person name="Stockel J."/>
            <person name="Liberton M."/>
            <person name="Min H."/>
            <person name="Sherman L.A."/>
            <person name="Pakrasi H.B."/>
        </authorList>
    </citation>
    <scope>NUCLEOTIDE SEQUENCE [LARGE SCALE GENOMIC DNA]</scope>
    <source>
        <strain>PCC 7425 / ATCC 29141</strain>
    </source>
</reference>
<feature type="chain" id="PRO_1000122956" description="Bifunctional purine biosynthesis protein PurH">
    <location>
        <begin position="1"/>
        <end position="514"/>
    </location>
</feature>
<feature type="domain" description="MGS-like" evidence="2">
    <location>
        <begin position="1"/>
        <end position="146"/>
    </location>
</feature>
<keyword id="KW-0378">Hydrolase</keyword>
<keyword id="KW-0511">Multifunctional enzyme</keyword>
<keyword id="KW-0658">Purine biosynthesis</keyword>
<keyword id="KW-0808">Transferase</keyword>
<dbReference type="EC" id="2.1.2.3" evidence="1"/>
<dbReference type="EC" id="3.5.4.10" evidence="1"/>
<dbReference type="EMBL" id="CP001344">
    <property type="protein sequence ID" value="ACL43825.1"/>
    <property type="molecule type" value="Genomic_DNA"/>
</dbReference>
<dbReference type="SMR" id="B8HPG4"/>
<dbReference type="STRING" id="395961.Cyan7425_1454"/>
<dbReference type="KEGG" id="cyn:Cyan7425_1454"/>
<dbReference type="eggNOG" id="COG0138">
    <property type="taxonomic scope" value="Bacteria"/>
</dbReference>
<dbReference type="HOGENOM" id="CLU_016316_5_2_3"/>
<dbReference type="OrthoDB" id="9802065at2"/>
<dbReference type="UniPathway" id="UPA00074">
    <property type="reaction ID" value="UER00133"/>
</dbReference>
<dbReference type="UniPathway" id="UPA00074">
    <property type="reaction ID" value="UER00135"/>
</dbReference>
<dbReference type="GO" id="GO:0005829">
    <property type="term" value="C:cytosol"/>
    <property type="evidence" value="ECO:0007669"/>
    <property type="project" value="TreeGrafter"/>
</dbReference>
<dbReference type="GO" id="GO:0003937">
    <property type="term" value="F:IMP cyclohydrolase activity"/>
    <property type="evidence" value="ECO:0007669"/>
    <property type="project" value="UniProtKB-UniRule"/>
</dbReference>
<dbReference type="GO" id="GO:0004643">
    <property type="term" value="F:phosphoribosylaminoimidazolecarboxamide formyltransferase activity"/>
    <property type="evidence" value="ECO:0007669"/>
    <property type="project" value="UniProtKB-UniRule"/>
</dbReference>
<dbReference type="GO" id="GO:0006189">
    <property type="term" value="P:'de novo' IMP biosynthetic process"/>
    <property type="evidence" value="ECO:0007669"/>
    <property type="project" value="UniProtKB-UniRule"/>
</dbReference>
<dbReference type="CDD" id="cd01421">
    <property type="entry name" value="IMPCH"/>
    <property type="match status" value="1"/>
</dbReference>
<dbReference type="FunFam" id="3.40.140.20:FF:000001">
    <property type="entry name" value="Bifunctional purine biosynthesis protein PurH"/>
    <property type="match status" value="1"/>
</dbReference>
<dbReference type="FunFam" id="3.40.50.1380:FF:000001">
    <property type="entry name" value="Bifunctional purine biosynthesis protein PurH"/>
    <property type="match status" value="1"/>
</dbReference>
<dbReference type="Gene3D" id="3.40.140.20">
    <property type="match status" value="2"/>
</dbReference>
<dbReference type="Gene3D" id="3.40.50.1380">
    <property type="entry name" value="Methylglyoxal synthase-like domain"/>
    <property type="match status" value="1"/>
</dbReference>
<dbReference type="HAMAP" id="MF_00139">
    <property type="entry name" value="PurH"/>
    <property type="match status" value="1"/>
</dbReference>
<dbReference type="InterPro" id="IPR024051">
    <property type="entry name" value="AICAR_Tfase_dup_dom_sf"/>
</dbReference>
<dbReference type="InterPro" id="IPR016193">
    <property type="entry name" value="Cytidine_deaminase-like"/>
</dbReference>
<dbReference type="InterPro" id="IPR011607">
    <property type="entry name" value="MGS-like_dom"/>
</dbReference>
<dbReference type="InterPro" id="IPR036914">
    <property type="entry name" value="MGS-like_dom_sf"/>
</dbReference>
<dbReference type="InterPro" id="IPR002695">
    <property type="entry name" value="PurH-like"/>
</dbReference>
<dbReference type="NCBIfam" id="NF002049">
    <property type="entry name" value="PRK00881.1"/>
    <property type="match status" value="1"/>
</dbReference>
<dbReference type="NCBIfam" id="TIGR00355">
    <property type="entry name" value="purH"/>
    <property type="match status" value="1"/>
</dbReference>
<dbReference type="PANTHER" id="PTHR11692:SF0">
    <property type="entry name" value="BIFUNCTIONAL PURINE BIOSYNTHESIS PROTEIN ATIC"/>
    <property type="match status" value="1"/>
</dbReference>
<dbReference type="PANTHER" id="PTHR11692">
    <property type="entry name" value="BIFUNCTIONAL PURINE BIOSYNTHESIS PROTEIN PURH"/>
    <property type="match status" value="1"/>
</dbReference>
<dbReference type="Pfam" id="PF01808">
    <property type="entry name" value="AICARFT_IMPCHas"/>
    <property type="match status" value="1"/>
</dbReference>
<dbReference type="Pfam" id="PF02142">
    <property type="entry name" value="MGS"/>
    <property type="match status" value="1"/>
</dbReference>
<dbReference type="PIRSF" id="PIRSF000414">
    <property type="entry name" value="AICARFT_IMPCHas"/>
    <property type="match status" value="1"/>
</dbReference>
<dbReference type="SMART" id="SM00798">
    <property type="entry name" value="AICARFT_IMPCHas"/>
    <property type="match status" value="1"/>
</dbReference>
<dbReference type="SMART" id="SM00851">
    <property type="entry name" value="MGS"/>
    <property type="match status" value="1"/>
</dbReference>
<dbReference type="SUPFAM" id="SSF53927">
    <property type="entry name" value="Cytidine deaminase-like"/>
    <property type="match status" value="1"/>
</dbReference>
<dbReference type="SUPFAM" id="SSF52335">
    <property type="entry name" value="Methylglyoxal synthase-like"/>
    <property type="match status" value="1"/>
</dbReference>
<dbReference type="PROSITE" id="PS51855">
    <property type="entry name" value="MGS"/>
    <property type="match status" value="1"/>
</dbReference>
<evidence type="ECO:0000255" key="1">
    <source>
        <dbReference type="HAMAP-Rule" id="MF_00139"/>
    </source>
</evidence>
<evidence type="ECO:0000255" key="2">
    <source>
        <dbReference type="PROSITE-ProRule" id="PRU01202"/>
    </source>
</evidence>